<accession>B5YXM9</accession>
<dbReference type="EMBL" id="CP001164">
    <property type="protein sequence ID" value="ACI37237.1"/>
    <property type="molecule type" value="Genomic_DNA"/>
</dbReference>
<dbReference type="RefSeq" id="WP_000804726.1">
    <property type="nucleotide sequence ID" value="NC_011353.1"/>
</dbReference>
<dbReference type="SMR" id="B5YXM9"/>
<dbReference type="GeneID" id="93775276"/>
<dbReference type="KEGG" id="ecf:ECH74115_1692"/>
<dbReference type="HOGENOM" id="CLU_036856_0_1_6"/>
<dbReference type="GO" id="GO:0005737">
    <property type="term" value="C:cytoplasm"/>
    <property type="evidence" value="ECO:0007669"/>
    <property type="project" value="UniProtKB-SubCell"/>
</dbReference>
<dbReference type="GO" id="GO:0016149">
    <property type="term" value="F:translation release factor activity, codon specific"/>
    <property type="evidence" value="ECO:0007669"/>
    <property type="project" value="UniProtKB-UniRule"/>
</dbReference>
<dbReference type="FunFam" id="3.30.160.20:FF:000004">
    <property type="entry name" value="Peptide chain release factor 1"/>
    <property type="match status" value="1"/>
</dbReference>
<dbReference type="FunFam" id="3.30.70.1660:FF:000002">
    <property type="entry name" value="Peptide chain release factor 1"/>
    <property type="match status" value="1"/>
</dbReference>
<dbReference type="FunFam" id="3.30.70.1660:FF:000004">
    <property type="entry name" value="Peptide chain release factor 1"/>
    <property type="match status" value="1"/>
</dbReference>
<dbReference type="Gene3D" id="3.30.160.20">
    <property type="match status" value="1"/>
</dbReference>
<dbReference type="Gene3D" id="3.30.70.1660">
    <property type="match status" value="1"/>
</dbReference>
<dbReference type="Gene3D" id="6.10.140.1950">
    <property type="match status" value="1"/>
</dbReference>
<dbReference type="HAMAP" id="MF_00093">
    <property type="entry name" value="Rel_fac_1"/>
    <property type="match status" value="1"/>
</dbReference>
<dbReference type="InterPro" id="IPR005139">
    <property type="entry name" value="PCRF"/>
</dbReference>
<dbReference type="InterPro" id="IPR000352">
    <property type="entry name" value="Pep_chain_release_fac_I"/>
</dbReference>
<dbReference type="InterPro" id="IPR045853">
    <property type="entry name" value="Pep_chain_release_fac_I_sf"/>
</dbReference>
<dbReference type="InterPro" id="IPR050057">
    <property type="entry name" value="Prokaryotic/Mito_RF"/>
</dbReference>
<dbReference type="InterPro" id="IPR004373">
    <property type="entry name" value="RF-1"/>
</dbReference>
<dbReference type="NCBIfam" id="TIGR00019">
    <property type="entry name" value="prfA"/>
    <property type="match status" value="1"/>
</dbReference>
<dbReference type="NCBIfam" id="NF001859">
    <property type="entry name" value="PRK00591.1"/>
    <property type="match status" value="1"/>
</dbReference>
<dbReference type="PANTHER" id="PTHR43804">
    <property type="entry name" value="LD18447P"/>
    <property type="match status" value="1"/>
</dbReference>
<dbReference type="PANTHER" id="PTHR43804:SF7">
    <property type="entry name" value="LD18447P"/>
    <property type="match status" value="1"/>
</dbReference>
<dbReference type="Pfam" id="PF03462">
    <property type="entry name" value="PCRF"/>
    <property type="match status" value="1"/>
</dbReference>
<dbReference type="Pfam" id="PF00472">
    <property type="entry name" value="RF-1"/>
    <property type="match status" value="1"/>
</dbReference>
<dbReference type="SMART" id="SM00937">
    <property type="entry name" value="PCRF"/>
    <property type="match status" value="1"/>
</dbReference>
<dbReference type="SUPFAM" id="SSF75620">
    <property type="entry name" value="Release factor"/>
    <property type="match status" value="1"/>
</dbReference>
<dbReference type="PROSITE" id="PS00745">
    <property type="entry name" value="RF_PROK_I"/>
    <property type="match status" value="1"/>
</dbReference>
<name>RF1_ECO5E</name>
<evidence type="ECO:0000255" key="1">
    <source>
        <dbReference type="HAMAP-Rule" id="MF_00093"/>
    </source>
</evidence>
<evidence type="ECO:0000256" key="2">
    <source>
        <dbReference type="SAM" id="MobiDB-lite"/>
    </source>
</evidence>
<reference key="1">
    <citation type="journal article" date="2011" name="Proc. Natl. Acad. Sci. U.S.A.">
        <title>Genomic anatomy of Escherichia coli O157:H7 outbreaks.</title>
        <authorList>
            <person name="Eppinger M."/>
            <person name="Mammel M.K."/>
            <person name="Leclerc J.E."/>
            <person name="Ravel J."/>
            <person name="Cebula T.A."/>
        </authorList>
    </citation>
    <scope>NUCLEOTIDE SEQUENCE [LARGE SCALE GENOMIC DNA]</scope>
    <source>
        <strain>EC4115 / EHEC</strain>
    </source>
</reference>
<proteinExistence type="inferred from homology"/>
<organism>
    <name type="scientific">Escherichia coli O157:H7 (strain EC4115 / EHEC)</name>
    <dbReference type="NCBI Taxonomy" id="444450"/>
    <lineage>
        <taxon>Bacteria</taxon>
        <taxon>Pseudomonadati</taxon>
        <taxon>Pseudomonadota</taxon>
        <taxon>Gammaproteobacteria</taxon>
        <taxon>Enterobacterales</taxon>
        <taxon>Enterobacteriaceae</taxon>
        <taxon>Escherichia</taxon>
    </lineage>
</organism>
<protein>
    <recommendedName>
        <fullName evidence="1">Peptide chain release factor 1</fullName>
        <shortName evidence="1">RF-1</shortName>
    </recommendedName>
</protein>
<keyword id="KW-0963">Cytoplasm</keyword>
<keyword id="KW-0488">Methylation</keyword>
<keyword id="KW-0648">Protein biosynthesis</keyword>
<feature type="chain" id="PRO_1000093451" description="Peptide chain release factor 1">
    <location>
        <begin position="1"/>
        <end position="360"/>
    </location>
</feature>
<feature type="region of interest" description="Disordered" evidence="2">
    <location>
        <begin position="284"/>
        <end position="313"/>
    </location>
</feature>
<feature type="modified residue" description="N5-methylglutamine" evidence="1">
    <location>
        <position position="235"/>
    </location>
</feature>
<gene>
    <name evidence="1" type="primary">prfA</name>
    <name type="ordered locus">ECH74115_1692</name>
</gene>
<sequence>MKPSIVAKLEALHERHEEVQALLGDAQTIADQERFRALSREYAQLSDVSRCFTDWQQVQEDIETAQMMLDDPEMREMAQDELREAKEKSEQLEQQLQVLLLPKDPDDERNAFLEVRAGTGGDEAALFAGDLFRMYSRYAEARRWRVEIMSASEGEHGGYKEIIAKISGDGVYGRLKFESGGHRVQRVPATESQGRIHTSACTVAVMPELPDAELPDINPADLRIDTFRSSGAGGQHVNTTDSAIRITHLPTGIVVECQDERSQHKNKAKALSVLGARIHAAEMAKRQQAEASTRRNLLGSGDRSDRNRTYNFPQGRVTDHRINLTLYRLDEVMEGKLDMLIEPIIQEHQADQLAALSEQE</sequence>
<comment type="function">
    <text evidence="1">Peptide chain release factor 1 directs the termination of translation in response to the peptide chain termination codons UAG and UAA.</text>
</comment>
<comment type="subcellular location">
    <subcellularLocation>
        <location evidence="1">Cytoplasm</location>
    </subcellularLocation>
</comment>
<comment type="PTM">
    <text evidence="1">Methylated by PrmC. Methylation increases the termination efficiency of RF1.</text>
</comment>
<comment type="similarity">
    <text evidence="1">Belongs to the prokaryotic/mitochondrial release factor family.</text>
</comment>